<name>CIPKO_ARATH</name>
<proteinExistence type="evidence at protein level"/>
<sequence>MTKKMRRVGKYEVGRTIGEGTFAKVKFARNTDTGDNVAIKIMAKSTILKNRMVDQIKREISIMKIVRHPNIVRLYEVLASPSKIYIVLEFVTGGELFDRIVHKGRLEESESRKYFQQLVDAVAHCHCKGVYHRDLKPENLLLDTNGNLKVSDFGLSALPQEGVELLRTTCGTPNYVAPEVLSGQGYDGSAADIWSCGVILFVILAGYLPFSETDLPGLYRKINAAEFSCPPWFSAEVKFLIHRILDPNPKTRIQIQGIKKDPWFRLNYVPIRAREEEEVNLDDIRAVFDGIEGSYVAENVERNDEGPLMMNAFEMITLSQGLNLSALFDRRQDFVKRQTRFVSRREPSEIIANIEAVANSMGFKSHTRNFKTRLEGLSSIKAGQLAVVIEIYEVAPSLFMVDVRKAAGETLEYHKFYKKLCSKLENIIWRATEGIPKSEILRTITF</sequence>
<feature type="chain" id="PRO_0000085877" description="CBL-interacting serine/threonine-protein kinase 24">
    <location>
        <begin position="1"/>
        <end position="446"/>
    </location>
</feature>
<feature type="domain" description="Protein kinase" evidence="3">
    <location>
        <begin position="11"/>
        <end position="264"/>
    </location>
</feature>
<feature type="domain" description="NAF" evidence="4">
    <location>
        <begin position="305"/>
        <end position="329"/>
    </location>
</feature>
<feature type="region of interest" description="Activation loop">
    <location>
        <begin position="152"/>
        <end position="179"/>
    </location>
</feature>
<feature type="region of interest" description="PPI">
    <location>
        <begin position="336"/>
        <end position="365"/>
    </location>
</feature>
<feature type="active site" description="Proton acceptor" evidence="3 5">
    <location>
        <position position="134"/>
    </location>
</feature>
<feature type="binding site" evidence="3">
    <location>
        <begin position="17"/>
        <end position="25"/>
    </location>
    <ligand>
        <name>ATP</name>
        <dbReference type="ChEBI" id="CHEBI:30616"/>
    </ligand>
</feature>
<feature type="binding site" evidence="3">
    <location>
        <position position="40"/>
    </location>
    <ligand>
        <name>ATP</name>
        <dbReference type="ChEBI" id="CHEBI:30616"/>
    </ligand>
</feature>
<feature type="modified residue" description="Phosphoserine" evidence="2">
    <location>
        <position position="156"/>
    </location>
</feature>
<feature type="modified residue" description="Phosphothreonine" evidence="1">
    <location>
        <position position="168"/>
    </location>
</feature>
<feature type="mutagenesis site" description="Abolishes autophosphorylation." evidence="7">
    <original>K</original>
    <variation>N</variation>
    <location>
        <position position="40"/>
    </location>
</feature>
<feature type="mutagenesis site" description="Increases kinase activity." evidence="9">
    <original>S</original>
    <variation>D</variation>
    <location>
        <position position="156"/>
    </location>
</feature>
<feature type="mutagenesis site" description="Increases kinase activity." evidence="6">
    <original>T</original>
    <variation>D</variation>
    <location>
        <position position="168"/>
    </location>
</feature>
<feature type="mutagenesis site" description="Increases kinase activity." evidence="9">
    <original>Y</original>
    <variation>D</variation>
    <location>
        <position position="175"/>
    </location>
</feature>
<feature type="mutagenesis site" description="Abolishes autophosphorylation." evidence="7">
    <original>G</original>
    <variation>E</variation>
    <location>
        <position position="197"/>
    </location>
</feature>
<feature type="strand" evidence="18">
    <location>
        <begin position="11"/>
        <end position="13"/>
    </location>
</feature>
<feature type="strand" evidence="18">
    <location>
        <begin position="24"/>
        <end position="30"/>
    </location>
</feature>
<feature type="turn" evidence="18">
    <location>
        <begin position="31"/>
        <end position="34"/>
    </location>
</feature>
<feature type="strand" evidence="18">
    <location>
        <begin position="35"/>
        <end position="43"/>
    </location>
</feature>
<feature type="helix" evidence="18">
    <location>
        <begin position="44"/>
        <end position="48"/>
    </location>
</feature>
<feature type="helix" evidence="18">
    <location>
        <begin position="53"/>
        <end position="65"/>
    </location>
</feature>
<feature type="strand" evidence="18">
    <location>
        <begin position="77"/>
        <end position="79"/>
    </location>
</feature>
<feature type="strand" evidence="18">
    <location>
        <begin position="81"/>
        <end position="88"/>
    </location>
</feature>
<feature type="strand" evidence="18">
    <location>
        <begin position="92"/>
        <end position="95"/>
    </location>
</feature>
<feature type="helix" evidence="18">
    <location>
        <begin position="97"/>
        <end position="103"/>
    </location>
</feature>
<feature type="helix" evidence="18">
    <location>
        <begin position="108"/>
        <end position="127"/>
    </location>
</feature>
<feature type="turn" evidence="18">
    <location>
        <begin position="137"/>
        <end position="139"/>
    </location>
</feature>
<feature type="strand" evidence="18">
    <location>
        <begin position="140"/>
        <end position="142"/>
    </location>
</feature>
<feature type="strand" evidence="18">
    <location>
        <begin position="148"/>
        <end position="150"/>
    </location>
</feature>
<feature type="strand" evidence="18">
    <location>
        <begin position="173"/>
        <end position="176"/>
    </location>
</feature>
<feature type="helix" evidence="18">
    <location>
        <begin position="178"/>
        <end position="182"/>
    </location>
</feature>
<feature type="helix" evidence="18">
    <location>
        <begin position="188"/>
        <end position="205"/>
    </location>
</feature>
<feature type="strand" evidence="18">
    <location>
        <begin position="212"/>
        <end position="214"/>
    </location>
</feature>
<feature type="helix" evidence="18">
    <location>
        <begin position="215"/>
        <end position="224"/>
    </location>
</feature>
<feature type="helix" evidence="18">
    <location>
        <begin position="235"/>
        <end position="244"/>
    </location>
</feature>
<feature type="turn" evidence="18">
    <location>
        <begin position="249"/>
        <end position="251"/>
    </location>
</feature>
<feature type="helix" evidence="18">
    <location>
        <begin position="255"/>
        <end position="260"/>
    </location>
</feature>
<feature type="helix" evidence="18">
    <location>
        <begin position="262"/>
        <end position="265"/>
    </location>
</feature>
<feature type="helix" evidence="18">
    <location>
        <begin position="281"/>
        <end position="286"/>
    </location>
</feature>
<feature type="helix" evidence="17">
    <location>
        <begin position="312"/>
        <end position="316"/>
    </location>
</feature>
<feature type="turn" evidence="17">
    <location>
        <begin position="320"/>
        <end position="322"/>
    </location>
</feature>
<feature type="helix" evidence="17">
    <location>
        <begin position="324"/>
        <end position="328"/>
    </location>
</feature>
<feature type="strand" evidence="17">
    <location>
        <begin position="340"/>
        <end position="343"/>
    </location>
</feature>
<feature type="helix" evidence="17">
    <location>
        <begin position="347"/>
        <end position="360"/>
    </location>
</feature>
<feature type="strand" evidence="17">
    <location>
        <begin position="363"/>
        <end position="376"/>
    </location>
</feature>
<feature type="helix" evidence="17">
    <location>
        <begin position="381"/>
        <end position="383"/>
    </location>
</feature>
<feature type="strand" evidence="17">
    <location>
        <begin position="386"/>
        <end position="395"/>
    </location>
</feature>
<feature type="strand" evidence="17">
    <location>
        <begin position="398"/>
        <end position="408"/>
    </location>
</feature>
<feature type="helix" evidence="17">
    <location>
        <begin position="410"/>
        <end position="423"/>
    </location>
</feature>
<feature type="turn" evidence="17">
    <location>
        <begin position="425"/>
        <end position="427"/>
    </location>
</feature>
<evidence type="ECO:0000250" key="1">
    <source>
        <dbReference type="UniProtKB" id="Q38997"/>
    </source>
</evidence>
<evidence type="ECO:0000250" key="2">
    <source>
        <dbReference type="UniProtKB" id="Q93V58"/>
    </source>
</evidence>
<evidence type="ECO:0000255" key="3">
    <source>
        <dbReference type="PROSITE-ProRule" id="PRU00159"/>
    </source>
</evidence>
<evidence type="ECO:0000255" key="4">
    <source>
        <dbReference type="PROSITE-ProRule" id="PRU00256"/>
    </source>
</evidence>
<evidence type="ECO:0000255" key="5">
    <source>
        <dbReference type="PROSITE-ProRule" id="PRU10027"/>
    </source>
</evidence>
<evidence type="ECO:0000269" key="6">
    <source>
    </source>
</evidence>
<evidence type="ECO:0000269" key="7">
    <source>
    </source>
</evidence>
<evidence type="ECO:0000269" key="8">
    <source>
    </source>
</evidence>
<evidence type="ECO:0000269" key="9">
    <source>
    </source>
</evidence>
<evidence type="ECO:0000269" key="10">
    <source>
    </source>
</evidence>
<evidence type="ECO:0000269" key="11">
    <source>
    </source>
</evidence>
<evidence type="ECO:0000269" key="12">
    <source>
    </source>
</evidence>
<evidence type="ECO:0000269" key="13">
    <source>
    </source>
</evidence>
<evidence type="ECO:0000269" key="14">
    <source>
    </source>
</evidence>
<evidence type="ECO:0000269" key="15">
    <source>
    </source>
</evidence>
<evidence type="ECO:0000305" key="16"/>
<evidence type="ECO:0007829" key="17">
    <source>
        <dbReference type="PDB" id="2EHB"/>
    </source>
</evidence>
<evidence type="ECO:0007829" key="18">
    <source>
        <dbReference type="PDB" id="4D28"/>
    </source>
</evidence>
<keyword id="KW-0002">3D-structure</keyword>
<keyword id="KW-0067">ATP-binding</keyword>
<keyword id="KW-0963">Cytoplasm</keyword>
<keyword id="KW-0418">Kinase</keyword>
<keyword id="KW-0464">Manganese</keyword>
<keyword id="KW-0547">Nucleotide-binding</keyword>
<keyword id="KW-0539">Nucleus</keyword>
<keyword id="KW-0597">Phosphoprotein</keyword>
<keyword id="KW-1185">Reference proteome</keyword>
<keyword id="KW-0723">Serine/threonine-protein kinase</keyword>
<keyword id="KW-0808">Transferase</keyword>
<protein>
    <recommendedName>
        <fullName>CBL-interacting serine/threonine-protein kinase 24</fullName>
        <ecNumber>2.7.11.1</ecNumber>
    </recommendedName>
    <alternativeName>
        <fullName>Protein SALT OVERLY SENSITIVE 2</fullName>
    </alternativeName>
    <alternativeName>
        <fullName>SNF1-related kinase 3.11</fullName>
    </alternativeName>
</protein>
<gene>
    <name type="primary">CIPK24</name>
    <name type="synonym">SnRK3.11</name>
    <name type="synonym">SOS2</name>
    <name type="ordered locus">At5g35410</name>
    <name type="ORF">F6I13.1</name>
    <name type="ORF">K21B8.3</name>
</gene>
<organism>
    <name type="scientific">Arabidopsis thaliana</name>
    <name type="common">Mouse-ear cress</name>
    <dbReference type="NCBI Taxonomy" id="3702"/>
    <lineage>
        <taxon>Eukaryota</taxon>
        <taxon>Viridiplantae</taxon>
        <taxon>Streptophyta</taxon>
        <taxon>Embryophyta</taxon>
        <taxon>Tracheophyta</taxon>
        <taxon>Spermatophyta</taxon>
        <taxon>Magnoliopsida</taxon>
        <taxon>eudicotyledons</taxon>
        <taxon>Gunneridae</taxon>
        <taxon>Pentapetalae</taxon>
        <taxon>rosids</taxon>
        <taxon>malvids</taxon>
        <taxon>Brassicales</taxon>
        <taxon>Brassicaceae</taxon>
        <taxon>Camelineae</taxon>
        <taxon>Arabidopsis</taxon>
    </lineage>
</organism>
<dbReference type="EC" id="2.7.11.1"/>
<dbReference type="EMBL" id="AF237670">
    <property type="protein sequence ID" value="AAF62923.1"/>
    <property type="molecule type" value="Genomic_DNA"/>
</dbReference>
<dbReference type="EMBL" id="AF395081">
    <property type="protein sequence ID" value="AAK72257.1"/>
    <property type="molecule type" value="mRNA"/>
</dbReference>
<dbReference type="EMBL" id="AB025611">
    <property type="protein sequence ID" value="BAA98146.1"/>
    <property type="molecule type" value="Genomic_DNA"/>
</dbReference>
<dbReference type="EMBL" id="AF262044">
    <property type="protein sequence ID" value="AAF67384.1"/>
    <property type="status" value="ALT_SEQ"/>
    <property type="molecule type" value="Genomic_DNA"/>
</dbReference>
<dbReference type="EMBL" id="CP002688">
    <property type="protein sequence ID" value="AED93966.1"/>
    <property type="molecule type" value="Genomic_DNA"/>
</dbReference>
<dbReference type="EMBL" id="AY099621">
    <property type="protein sequence ID" value="AAM20472.1"/>
    <property type="molecule type" value="mRNA"/>
</dbReference>
<dbReference type="EMBL" id="BT002138">
    <property type="protein sequence ID" value="AAN72149.1"/>
    <property type="molecule type" value="mRNA"/>
</dbReference>
<dbReference type="RefSeq" id="NP_198391.1">
    <property type="nucleotide sequence ID" value="NM_122932.5"/>
</dbReference>
<dbReference type="PDB" id="2EHB">
    <property type="method" value="X-ray"/>
    <property type="resolution" value="2.10 A"/>
    <property type="chains" value="D=304-446"/>
</dbReference>
<dbReference type="PDB" id="4D28">
    <property type="method" value="X-ray"/>
    <property type="resolution" value="3.30 A"/>
    <property type="chains" value="A/B/C/D=1-446"/>
</dbReference>
<dbReference type="PDBsum" id="2EHB"/>
<dbReference type="PDBsum" id="4D28"/>
<dbReference type="SMR" id="Q9LDI3"/>
<dbReference type="BioGRID" id="18756">
    <property type="interactions" value="42"/>
</dbReference>
<dbReference type="DIP" id="DIP-34745N"/>
<dbReference type="FunCoup" id="Q9LDI3">
    <property type="interactions" value="1730"/>
</dbReference>
<dbReference type="IntAct" id="Q9LDI3">
    <property type="interactions" value="32"/>
</dbReference>
<dbReference type="STRING" id="3702.Q9LDI3"/>
<dbReference type="iPTMnet" id="Q9LDI3"/>
<dbReference type="PaxDb" id="3702-AT5G35410.1"/>
<dbReference type="ProteomicsDB" id="246690"/>
<dbReference type="EnsemblPlants" id="AT5G35410.1">
    <property type="protein sequence ID" value="AT5G35410.1"/>
    <property type="gene ID" value="AT5G35410"/>
</dbReference>
<dbReference type="GeneID" id="833502"/>
<dbReference type="Gramene" id="AT5G35410.1">
    <property type="protein sequence ID" value="AT5G35410.1"/>
    <property type="gene ID" value="AT5G35410"/>
</dbReference>
<dbReference type="KEGG" id="ath:AT5G35410"/>
<dbReference type="Araport" id="AT5G35410"/>
<dbReference type="TAIR" id="AT5G35410">
    <property type="gene designation" value="SOS2"/>
</dbReference>
<dbReference type="eggNOG" id="KOG0583">
    <property type="taxonomic scope" value="Eukaryota"/>
</dbReference>
<dbReference type="HOGENOM" id="CLU_000288_59_0_1"/>
<dbReference type="InParanoid" id="Q9LDI3"/>
<dbReference type="OrthoDB" id="193931at2759"/>
<dbReference type="PhylomeDB" id="Q9LDI3"/>
<dbReference type="SABIO-RK" id="Q9LDI3"/>
<dbReference type="EvolutionaryTrace" id="Q9LDI3"/>
<dbReference type="PRO" id="PR:Q9LDI3"/>
<dbReference type="Proteomes" id="UP000006548">
    <property type="component" value="Chromosome 5"/>
</dbReference>
<dbReference type="ExpressionAtlas" id="Q9LDI3">
    <property type="expression patterns" value="baseline and differential"/>
</dbReference>
<dbReference type="GO" id="GO:0005634">
    <property type="term" value="C:nucleus"/>
    <property type="evidence" value="ECO:0007669"/>
    <property type="project" value="UniProtKB-SubCell"/>
</dbReference>
<dbReference type="GO" id="GO:0009705">
    <property type="term" value="C:plant-type vacuole membrane"/>
    <property type="evidence" value="ECO:0000314"/>
    <property type="project" value="TAIR"/>
</dbReference>
<dbReference type="GO" id="GO:0005524">
    <property type="term" value="F:ATP binding"/>
    <property type="evidence" value="ECO:0007669"/>
    <property type="project" value="UniProtKB-KW"/>
</dbReference>
<dbReference type="GO" id="GO:0004672">
    <property type="term" value="F:protein kinase activity"/>
    <property type="evidence" value="ECO:0000314"/>
    <property type="project" value="TAIR"/>
</dbReference>
<dbReference type="GO" id="GO:0106310">
    <property type="term" value="F:protein serine kinase activity"/>
    <property type="evidence" value="ECO:0007669"/>
    <property type="project" value="RHEA"/>
</dbReference>
<dbReference type="GO" id="GO:0004674">
    <property type="term" value="F:protein serine/threonine kinase activity"/>
    <property type="evidence" value="ECO:0007669"/>
    <property type="project" value="UniProtKB-KW"/>
</dbReference>
<dbReference type="GO" id="GO:0009651">
    <property type="term" value="P:response to salt stress"/>
    <property type="evidence" value="ECO:0000315"/>
    <property type="project" value="TAIR"/>
</dbReference>
<dbReference type="GO" id="GO:0007165">
    <property type="term" value="P:signal transduction"/>
    <property type="evidence" value="ECO:0007669"/>
    <property type="project" value="InterPro"/>
</dbReference>
<dbReference type="CDD" id="cd12195">
    <property type="entry name" value="CIPK_C"/>
    <property type="match status" value="1"/>
</dbReference>
<dbReference type="FunFam" id="1.10.510.10:FF:000279">
    <property type="entry name" value="Non-specific serine/threonine protein kinase"/>
    <property type="match status" value="1"/>
</dbReference>
<dbReference type="FunFam" id="3.30.200.20:FF:000096">
    <property type="entry name" value="Non-specific serine/threonine protein kinase"/>
    <property type="match status" value="1"/>
</dbReference>
<dbReference type="FunFam" id="3.30.310.80:FF:000002">
    <property type="entry name" value="Non-specific serine/threonine protein kinase"/>
    <property type="match status" value="1"/>
</dbReference>
<dbReference type="Gene3D" id="3.30.310.80">
    <property type="entry name" value="Kinase associated domain 1, KA1"/>
    <property type="match status" value="1"/>
</dbReference>
<dbReference type="Gene3D" id="1.10.510.10">
    <property type="entry name" value="Transferase(Phosphotransferase) domain 1"/>
    <property type="match status" value="1"/>
</dbReference>
<dbReference type="InterPro" id="IPR011009">
    <property type="entry name" value="Kinase-like_dom_sf"/>
</dbReference>
<dbReference type="InterPro" id="IPR018451">
    <property type="entry name" value="NAF/FISL_domain"/>
</dbReference>
<dbReference type="InterPro" id="IPR004041">
    <property type="entry name" value="NAF_dom"/>
</dbReference>
<dbReference type="InterPro" id="IPR000719">
    <property type="entry name" value="Prot_kinase_dom"/>
</dbReference>
<dbReference type="InterPro" id="IPR017441">
    <property type="entry name" value="Protein_kinase_ATP_BS"/>
</dbReference>
<dbReference type="InterPro" id="IPR008271">
    <property type="entry name" value="Ser/Thr_kinase_AS"/>
</dbReference>
<dbReference type="PANTHER" id="PTHR43895">
    <property type="entry name" value="CALCIUM/CALMODULIN-DEPENDENT PROTEIN KINASE KINASE-RELATED"/>
    <property type="match status" value="1"/>
</dbReference>
<dbReference type="PANTHER" id="PTHR43895:SF32">
    <property type="entry name" value="SERINE_THREONINE-PROTEIN KINASE CHK1"/>
    <property type="match status" value="1"/>
</dbReference>
<dbReference type="Pfam" id="PF03822">
    <property type="entry name" value="NAF"/>
    <property type="match status" value="1"/>
</dbReference>
<dbReference type="Pfam" id="PF00069">
    <property type="entry name" value="Pkinase"/>
    <property type="match status" value="1"/>
</dbReference>
<dbReference type="SMART" id="SM00220">
    <property type="entry name" value="S_TKc"/>
    <property type="match status" value="1"/>
</dbReference>
<dbReference type="SUPFAM" id="SSF56112">
    <property type="entry name" value="Protein kinase-like (PK-like)"/>
    <property type="match status" value="1"/>
</dbReference>
<dbReference type="PROSITE" id="PS50816">
    <property type="entry name" value="NAF"/>
    <property type="match status" value="1"/>
</dbReference>
<dbReference type="PROSITE" id="PS00107">
    <property type="entry name" value="PROTEIN_KINASE_ATP"/>
    <property type="match status" value="1"/>
</dbReference>
<dbReference type="PROSITE" id="PS50011">
    <property type="entry name" value="PROTEIN_KINASE_DOM"/>
    <property type="match status" value="1"/>
</dbReference>
<dbReference type="PROSITE" id="PS00108">
    <property type="entry name" value="PROTEIN_KINASE_ST"/>
    <property type="match status" value="1"/>
</dbReference>
<reference key="1">
    <citation type="journal article" date="2000" name="Proc. Natl. Acad. Sci. U.S.A.">
        <title>The Arabidopsis thaliana SOS2 gene encodes a protein kinase that is required for salt tolerance.</title>
        <authorList>
            <person name="Liu J."/>
            <person name="Ishitani M."/>
            <person name="Halfter U."/>
            <person name="Kim C.-S."/>
            <person name="Zhu J.-K."/>
        </authorList>
    </citation>
    <scope>NUCLEOTIDE SEQUENCE [GENOMIC DNA]</scope>
    <scope>CHARACTERIZATION</scope>
    <scope>MUTAGENESIS OF LYS-40 AND GLY-197</scope>
    <source>
        <strain>cv. Columbia</strain>
    </source>
</reference>
<reference key="2">
    <citation type="submission" date="2001-06" db="EMBL/GenBank/DDBJ databases">
        <title>Molecular characterization of the CIPK gene family from Arabidopsis thaliana.</title>
        <authorList>
            <person name="Weinl S."/>
            <person name="Albrecht V."/>
            <person name="Kudla J."/>
        </authorList>
    </citation>
    <scope>NUCLEOTIDE SEQUENCE [MRNA]</scope>
</reference>
<reference key="3">
    <citation type="submission" date="1999-04" db="EMBL/GenBank/DDBJ databases">
        <title>Structural analysis of Arabidopsis thaliana chromosome 5. XI.</title>
        <authorList>
            <person name="Kaneko T."/>
            <person name="Katoh T."/>
            <person name="Asamizu E."/>
            <person name="Sato S."/>
            <person name="Nakamura Y."/>
            <person name="Kotani H."/>
            <person name="Tabata S."/>
        </authorList>
    </citation>
    <scope>NUCLEOTIDE SEQUENCE [LARGE SCALE GENOMIC DNA]</scope>
    <source>
        <strain>cv. Columbia</strain>
    </source>
</reference>
<reference key="4">
    <citation type="journal article" date="2000" name="Nature">
        <title>Sequence and analysis of chromosome 5 of the plant Arabidopsis thaliana.</title>
        <authorList>
            <person name="Tabata S."/>
            <person name="Kaneko T."/>
            <person name="Nakamura Y."/>
            <person name="Kotani H."/>
            <person name="Kato T."/>
            <person name="Asamizu E."/>
            <person name="Miyajima N."/>
            <person name="Sasamoto S."/>
            <person name="Kimura T."/>
            <person name="Hosouchi T."/>
            <person name="Kawashima K."/>
            <person name="Kohara M."/>
            <person name="Matsumoto M."/>
            <person name="Matsuno A."/>
            <person name="Muraki A."/>
            <person name="Nakayama S."/>
            <person name="Nakazaki N."/>
            <person name="Naruo K."/>
            <person name="Okumura S."/>
            <person name="Shinpo S."/>
            <person name="Takeuchi C."/>
            <person name="Wada T."/>
            <person name="Watanabe A."/>
            <person name="Yamada M."/>
            <person name="Yasuda M."/>
            <person name="Sato S."/>
            <person name="de la Bastide M."/>
            <person name="Huang E."/>
            <person name="Spiegel L."/>
            <person name="Gnoj L."/>
            <person name="O'Shaughnessy A."/>
            <person name="Preston R."/>
            <person name="Habermann K."/>
            <person name="Murray J."/>
            <person name="Johnson D."/>
            <person name="Rohlfing T."/>
            <person name="Nelson J."/>
            <person name="Stoneking T."/>
            <person name="Pepin K."/>
            <person name="Spieth J."/>
            <person name="Sekhon M."/>
            <person name="Armstrong J."/>
            <person name="Becker M."/>
            <person name="Belter E."/>
            <person name="Cordum H."/>
            <person name="Cordes M."/>
            <person name="Courtney L."/>
            <person name="Courtney W."/>
            <person name="Dante M."/>
            <person name="Du H."/>
            <person name="Edwards J."/>
            <person name="Fryman J."/>
            <person name="Haakensen B."/>
            <person name="Lamar E."/>
            <person name="Latreille P."/>
            <person name="Leonard S."/>
            <person name="Meyer R."/>
            <person name="Mulvaney E."/>
            <person name="Ozersky P."/>
            <person name="Riley A."/>
            <person name="Strowmatt C."/>
            <person name="Wagner-McPherson C."/>
            <person name="Wollam A."/>
            <person name="Yoakum M."/>
            <person name="Bell M."/>
            <person name="Dedhia N."/>
            <person name="Parnell L."/>
            <person name="Shah R."/>
            <person name="Rodriguez M."/>
            <person name="Hoon See L."/>
            <person name="Vil D."/>
            <person name="Baker J."/>
            <person name="Kirchoff K."/>
            <person name="Toth K."/>
            <person name="King L."/>
            <person name="Bahret A."/>
            <person name="Miller B."/>
            <person name="Marra M.A."/>
            <person name="Martienssen R."/>
            <person name="McCombie W.R."/>
            <person name="Wilson R.K."/>
            <person name="Murphy G."/>
            <person name="Bancroft I."/>
            <person name="Volckaert G."/>
            <person name="Wambutt R."/>
            <person name="Duesterhoeft A."/>
            <person name="Stiekema W."/>
            <person name="Pohl T."/>
            <person name="Entian K.-D."/>
            <person name="Terryn N."/>
            <person name="Hartley N."/>
            <person name="Bent E."/>
            <person name="Johnson S."/>
            <person name="Langham S.-A."/>
            <person name="McCullagh B."/>
            <person name="Robben J."/>
            <person name="Grymonprez B."/>
            <person name="Zimmermann W."/>
            <person name="Ramsperger U."/>
            <person name="Wedler H."/>
            <person name="Balke K."/>
            <person name="Wedler E."/>
            <person name="Peters S."/>
            <person name="van Staveren M."/>
            <person name="Dirkse W."/>
            <person name="Mooijman P."/>
            <person name="Klein Lankhorst R."/>
            <person name="Weitzenegger T."/>
            <person name="Bothe G."/>
            <person name="Rose M."/>
            <person name="Hauf J."/>
            <person name="Berneiser S."/>
            <person name="Hempel S."/>
            <person name="Feldpausch M."/>
            <person name="Lamberth S."/>
            <person name="Villarroel R."/>
            <person name="Gielen J."/>
            <person name="Ardiles W."/>
            <person name="Bents O."/>
            <person name="Lemcke K."/>
            <person name="Kolesov G."/>
            <person name="Mayer K.F.X."/>
            <person name="Rudd S."/>
            <person name="Schoof H."/>
            <person name="Schueller C."/>
            <person name="Zaccaria P."/>
            <person name="Mewes H.-W."/>
            <person name="Bevan M."/>
            <person name="Fransz P.F."/>
        </authorList>
    </citation>
    <scope>NUCLEOTIDE SEQUENCE [LARGE SCALE GENOMIC DNA]</scope>
    <source>
        <strain>cv. Columbia</strain>
    </source>
</reference>
<reference key="5">
    <citation type="journal article" date="2017" name="Plant J.">
        <title>Araport11: a complete reannotation of the Arabidopsis thaliana reference genome.</title>
        <authorList>
            <person name="Cheng C.Y."/>
            <person name="Krishnakumar V."/>
            <person name="Chan A.P."/>
            <person name="Thibaud-Nissen F."/>
            <person name="Schobel S."/>
            <person name="Town C.D."/>
        </authorList>
    </citation>
    <scope>GENOME REANNOTATION</scope>
    <source>
        <strain>cv. Columbia</strain>
    </source>
</reference>
<reference key="6">
    <citation type="journal article" date="2003" name="Science">
        <title>Empirical analysis of transcriptional activity in the Arabidopsis genome.</title>
        <authorList>
            <person name="Yamada K."/>
            <person name="Lim J."/>
            <person name="Dale J.M."/>
            <person name="Chen H."/>
            <person name="Shinn P."/>
            <person name="Palm C.J."/>
            <person name="Southwick A.M."/>
            <person name="Wu H.C."/>
            <person name="Kim C.J."/>
            <person name="Nguyen M."/>
            <person name="Pham P.K."/>
            <person name="Cheuk R.F."/>
            <person name="Karlin-Newmann G."/>
            <person name="Liu S.X."/>
            <person name="Lam B."/>
            <person name="Sakano H."/>
            <person name="Wu T."/>
            <person name="Yu G."/>
            <person name="Miranda M."/>
            <person name="Quach H.L."/>
            <person name="Tripp M."/>
            <person name="Chang C.H."/>
            <person name="Lee J.M."/>
            <person name="Toriumi M.J."/>
            <person name="Chan M.M."/>
            <person name="Tang C.C."/>
            <person name="Onodera C.S."/>
            <person name="Deng J.M."/>
            <person name="Akiyama K."/>
            <person name="Ansari Y."/>
            <person name="Arakawa T."/>
            <person name="Banh J."/>
            <person name="Banno F."/>
            <person name="Bowser L."/>
            <person name="Brooks S.Y."/>
            <person name="Carninci P."/>
            <person name="Chao Q."/>
            <person name="Choy N."/>
            <person name="Enju A."/>
            <person name="Goldsmith A.D."/>
            <person name="Gurjal M."/>
            <person name="Hansen N.F."/>
            <person name="Hayashizaki Y."/>
            <person name="Johnson-Hopson C."/>
            <person name="Hsuan V.W."/>
            <person name="Iida K."/>
            <person name="Karnes M."/>
            <person name="Khan S."/>
            <person name="Koesema E."/>
            <person name="Ishida J."/>
            <person name="Jiang P.X."/>
            <person name="Jones T."/>
            <person name="Kawai J."/>
            <person name="Kamiya A."/>
            <person name="Meyers C."/>
            <person name="Nakajima M."/>
            <person name="Narusaka M."/>
            <person name="Seki M."/>
            <person name="Sakurai T."/>
            <person name="Satou M."/>
            <person name="Tamse R."/>
            <person name="Vaysberg M."/>
            <person name="Wallender E.K."/>
            <person name="Wong C."/>
            <person name="Yamamura Y."/>
            <person name="Yuan S."/>
            <person name="Shinozaki K."/>
            <person name="Davis R.W."/>
            <person name="Theologis A."/>
            <person name="Ecker J.R."/>
        </authorList>
    </citation>
    <scope>NUCLEOTIDE SEQUENCE [LARGE SCALE MRNA]</scope>
    <source>
        <strain>cv. Columbia</strain>
    </source>
</reference>
<reference key="7">
    <citation type="journal article" date="2000" name="Proc. Natl. Acad. Sci. U.S.A.">
        <title>The Arabidopsis SOS2 protein kinase physically interacts with and is activated by the calcium-binding protein SOS3.</title>
        <authorList>
            <person name="Halfter U."/>
            <person name="Ishitani M."/>
            <person name="Zhu J.-K."/>
        </authorList>
    </citation>
    <scope>FUNCTION</scope>
    <scope>INTERACTION WITH CBL4</scope>
    <scope>MUTAGENESIS OF THR-168</scope>
</reference>
<reference key="8">
    <citation type="journal article" date="2001" name="Plant Cell">
        <title>Molecular characterization of functional domains in the protein kinase SOS2 that is required for plant salt tolerance.</title>
        <authorList>
            <person name="Guo Y."/>
            <person name="Halfter U."/>
            <person name="Ishitani M."/>
            <person name="Zhu J.-K."/>
        </authorList>
    </citation>
    <scope>ACTIVATION DOMAINS</scope>
</reference>
<reference key="9">
    <citation type="journal article" date="2002" name="Proc. Natl. Acad. Sci. U.S.A.">
        <title>Regulation of SOS1, a plasma membrane Na(+)/H(+) exchanger in Arabidopsis thaliana, by SOS2 and SOS3.</title>
        <authorList>
            <person name="Qiu Q.-S."/>
            <person name="Guo Y."/>
            <person name="Dietrich M.A."/>
            <person name="Schumaker K.S."/>
            <person name="Zhu J.-K."/>
        </authorList>
    </citation>
    <scope>FUNCTION</scope>
</reference>
<reference key="10">
    <citation type="journal article" date="2002" name="Plant Physiol.">
        <title>Biochemical characterization of the Arabidopsis protein kinase SOS2 that functions in salt tolerance.</title>
        <authorList>
            <person name="Gong D."/>
            <person name="Guo Y."/>
            <person name="Jagendorf A.T."/>
            <person name="Zhu J.-K."/>
        </authorList>
    </citation>
    <scope>MUTAGENESIS OF SER-156 AND TYR-175</scope>
</reference>
<reference key="11">
    <citation type="journal article" date="2003" name="Proc. Natl. Acad. Sci. U.S.A.">
        <title>A novel domain in the protein kinase SOS2 mediates interaction with the protein phosphatase 2C ABI2.</title>
        <authorList>
            <person name="Ohta M."/>
            <person name="Guo Y."/>
            <person name="Halfter U."/>
            <person name="Zhu J.-K."/>
        </authorList>
    </citation>
    <scope>INTERACTION WITH ABI2</scope>
</reference>
<reference key="12">
    <citation type="journal article" date="2003" name="Plant Physiol.">
        <title>The Arabidopsis CDPK-SnRK superfamily of protein kinases.</title>
        <authorList>
            <person name="Hrabak E.M."/>
            <person name="Chan C.W.M."/>
            <person name="Gribskov M."/>
            <person name="Harper J.F."/>
            <person name="Choi J.H."/>
            <person name="Halford N."/>
            <person name="Kudla J."/>
            <person name="Luan S."/>
            <person name="Nimmo H.G."/>
            <person name="Sussman M.R."/>
            <person name="Thomas M."/>
            <person name="Walker-Simmons K."/>
            <person name="Zhu J.-K."/>
            <person name="Harmon A.C."/>
        </authorList>
    </citation>
    <scope>GENE FAMILY</scope>
    <scope>NOMENCLATURE</scope>
</reference>
<reference key="13">
    <citation type="journal article" date="2004" name="J. Biol. Chem.">
        <title>The protein kinase SOS2 activates the Arabidopsis H(+)/Ca(2+) antiporter CAX1 to integrate calcium transport and salt tolerance.</title>
        <authorList>
            <person name="Cheng N.-H."/>
            <person name="Pittman J.K."/>
            <person name="Zhu J.-K."/>
            <person name="Hirschi K.D."/>
        </authorList>
    </citation>
    <scope>FUNCTION</scope>
</reference>
<reference key="14">
    <citation type="journal article" date="2004" name="Plant Physiol.">
        <title>Calcium sensors and their interacting protein kinases: genomics of the Arabidopsis and rice CBL-CIPK signaling networks.</title>
        <authorList>
            <person name="Kolukisaoglu U."/>
            <person name="Weinl S."/>
            <person name="Blazevic D."/>
            <person name="Batistic O."/>
            <person name="Kudla J."/>
        </authorList>
    </citation>
    <scope>INTERACTION WITH CBL1 AND CBL9</scope>
</reference>
<reference key="15">
    <citation type="journal article" date="2007" name="Plant J.">
        <title>The calcium sensor CBL10 mediates salt tolerance by regulating ion homeostasis in Arabidopsis.</title>
        <authorList>
            <person name="Kim B.G."/>
            <person name="Waadt R."/>
            <person name="Cheong Y.H."/>
            <person name="Pandey G.K."/>
            <person name="Dominguez-Solis J.R."/>
            <person name="Schueltke S."/>
            <person name="Lee S.C."/>
            <person name="Kudla J."/>
            <person name="Luan S."/>
        </authorList>
    </citation>
    <scope>INTERACTION WITH CBL1; CBL2; CBL5 AND CBL10</scope>
    <scope>SUBCELLULAR LOCATION</scope>
</reference>
<reference key="16">
    <citation type="journal article" date="2012" name="J. Biol. Chem.">
        <title>Phosphorylation of calcineurin B-like (CBL) calcium sensor proteins by their CBL-interacting protein kinases (CIPKs) is required for full activity of CBL-CIPK complexes toward their target proteins.</title>
        <authorList>
            <person name="Hashimoto K."/>
            <person name="Eckert C."/>
            <person name="Anschuetz U."/>
            <person name="Scholz M."/>
            <person name="Held K."/>
            <person name="Waadt R."/>
            <person name="Reyer A."/>
            <person name="Hippler M."/>
            <person name="Becker D."/>
            <person name="Kudla J."/>
        </authorList>
    </citation>
    <scope>FUNCTION</scope>
    <scope>CATALYTIC ACTIVITY</scope>
    <scope>COFACTOR</scope>
    <scope>BIOPHYSICOCHEMICAL PROPERTIES</scope>
    <scope>PHOSPHORYLATION</scope>
    <scope>INTERACTION WITH CBL1; CBL4 AND CBL10</scope>
    <scope>DOMAIN</scope>
</reference>
<reference key="17">
    <citation type="journal article" date="2007" name="Mol. Cell">
        <title>The structure of the C-terminal domain of the protein kinase AtSOS2 bound to the calcium sensor AtSOS3.</title>
        <authorList>
            <person name="Sanchez-Barrena M.J."/>
            <person name="Fujii H."/>
            <person name="Angulo I."/>
            <person name="Martinez-Ripoll M."/>
            <person name="Zhu J.-K."/>
            <person name="Albert A."/>
        </authorList>
    </citation>
    <scope>X-RAY CRYSTALLOGRAPHY (2.1 ANGSTROMS) OF 304-446 IN COMPLEX WITH SOS3</scope>
    <scope>INTERACTION WITH SOS3 AND ABI2</scope>
</reference>
<accession>Q9LDI3</accession>
<accession>Q9LKR2</accession>
<comment type="function">
    <text evidence="6 8 11 15">Involved in the regulatory pathway for the control of intracellular Na(+) and K(+) homeostasis and salt tolerance. Activates the vacuolar H(+)/Ca(2+) antiporter CAX1 and operates in synergy with CBL4/SOS3 to activate the plasma membrane Na(+)/H(+) antiporter SOS1. CIPK serine-threonine protein kinases interact with CBL proteins. Binding of a CBL protein to the regulatory NAF domain of CIPK protein lead to the activation of the kinase in a calcium-dependent manner. Phosphorylates CBL1, CBL4 and CBL10.</text>
</comment>
<comment type="catalytic activity">
    <reaction evidence="15">
        <text>L-seryl-[protein] + ATP = O-phospho-L-seryl-[protein] + ADP + H(+)</text>
        <dbReference type="Rhea" id="RHEA:17989"/>
        <dbReference type="Rhea" id="RHEA-COMP:9863"/>
        <dbReference type="Rhea" id="RHEA-COMP:11604"/>
        <dbReference type="ChEBI" id="CHEBI:15378"/>
        <dbReference type="ChEBI" id="CHEBI:29999"/>
        <dbReference type="ChEBI" id="CHEBI:30616"/>
        <dbReference type="ChEBI" id="CHEBI:83421"/>
        <dbReference type="ChEBI" id="CHEBI:456216"/>
        <dbReference type="EC" id="2.7.11.1"/>
    </reaction>
</comment>
<comment type="catalytic activity">
    <reaction evidence="15">
        <text>L-threonyl-[protein] + ATP = O-phospho-L-threonyl-[protein] + ADP + H(+)</text>
        <dbReference type="Rhea" id="RHEA:46608"/>
        <dbReference type="Rhea" id="RHEA-COMP:11060"/>
        <dbReference type="Rhea" id="RHEA-COMP:11605"/>
        <dbReference type="ChEBI" id="CHEBI:15378"/>
        <dbReference type="ChEBI" id="CHEBI:30013"/>
        <dbReference type="ChEBI" id="CHEBI:30616"/>
        <dbReference type="ChEBI" id="CHEBI:61977"/>
        <dbReference type="ChEBI" id="CHEBI:456216"/>
        <dbReference type="EC" id="2.7.11.1"/>
    </reaction>
</comment>
<comment type="cofactor">
    <cofactor evidence="15">
        <name>Mn(2+)</name>
        <dbReference type="ChEBI" id="CHEBI:29035"/>
    </cofactor>
</comment>
<comment type="biophysicochemical properties">
    <kinetics>
        <KM evidence="15">131.2 uM for synthetic substrate</KM>
        <Vmax evidence="15">1304.0 pmol/min/mg enzyme</Vmax>
    </kinetics>
</comment>
<comment type="subunit">
    <text evidence="6 10 12 13 14 15">Interacts with CBL1, CBL2, CBL4/SOS3, CBL5, CBL9, CBL10 and with the protein phosphatase 2C ABI2.</text>
</comment>
<comment type="interaction">
    <interactant intactId="EBI-537551">
        <id>Q9LDI3</id>
    </interactant>
    <interactant intactId="EBI-537680">
        <id>O04719</id>
        <label>ABI2</label>
    </interactant>
    <organismsDiffer>false</organismsDiffer>
    <experiments>4</experiments>
</comment>
<comment type="interaction">
    <interactant intactId="EBI-537551">
        <id>Q9LDI3</id>
    </interactant>
    <interactant intactId="EBI-1235664">
        <id>P25854</id>
        <label>CAM4</label>
    </interactant>
    <organismsDiffer>false</organismsDiffer>
    <experiments>2</experiments>
</comment>
<comment type="interaction">
    <interactant intactId="EBI-537551">
        <id>Q9LDI3</id>
    </interactant>
    <interactant intactId="EBI-1236031">
        <id>P59220</id>
        <label>CAM7</label>
    </interactant>
    <organismsDiffer>false</organismsDiffer>
    <experiments>2</experiments>
</comment>
<comment type="interaction">
    <interactant intactId="EBI-537551">
        <id>Q9LDI3</id>
    </interactant>
    <interactant intactId="EBI-974530">
        <id>O81445</id>
        <label>CBL1</label>
    </interactant>
    <organismsDiffer>false</organismsDiffer>
    <experiments>6</experiments>
</comment>
<comment type="interaction">
    <interactant intactId="EBI-537551">
        <id>Q9LDI3</id>
    </interactant>
    <interactant intactId="EBI-2026616">
        <id>Q7FRS8</id>
        <label>CBL10</label>
    </interactant>
    <organismsDiffer>false</organismsDiffer>
    <experiments>5</experiments>
</comment>
<comment type="interaction">
    <interactant intactId="EBI-537551">
        <id>Q9LDI3</id>
    </interactant>
    <interactant intactId="EBI-2026677">
        <id>Q7FRS8-2</id>
        <label>CBL10</label>
    </interactant>
    <organismsDiffer>false</organismsDiffer>
    <experiments>4</experiments>
</comment>
<comment type="interaction">
    <interactant intactId="EBI-537551">
        <id>Q9LDI3</id>
    </interactant>
    <interactant intactId="EBI-537541">
        <id>O81223</id>
        <label>CBL4</label>
    </interactant>
    <organismsDiffer>false</organismsDiffer>
    <experiments>10</experiments>
</comment>
<comment type="interaction">
    <interactant intactId="EBI-537551">
        <id>Q9LDI3</id>
    </interactant>
    <interactant intactId="EBI-637381">
        <id>Q9LTB8</id>
        <label>CBL9</label>
    </interactant>
    <organismsDiffer>false</organismsDiffer>
    <experiments>8</experiments>
</comment>
<comment type="interaction">
    <interactant intactId="EBI-537551">
        <id>Q9LDI3</id>
    </interactant>
    <interactant intactId="EBI-1236048">
        <id>Q9S744</id>
        <label>CML9</label>
    </interactant>
    <organismsDiffer>false</organismsDiffer>
    <experiments>2</experiments>
</comment>
<comment type="interaction">
    <interactant intactId="EBI-537551">
        <id>Q9LDI3</id>
    </interactant>
    <interactant intactId="EBI-349517">
        <id>O64903</id>
        <label>NDPK2</label>
    </interactant>
    <organismsDiffer>false</organismsDiffer>
    <experiments>3</experiments>
</comment>
<comment type="interaction">
    <interactant intactId="EBI-537551">
        <id>Q9LDI3</id>
    </interactant>
    <interactant intactId="EBI-2368285">
        <id>Q9LKW9</id>
        <label>NHX7</label>
    </interactant>
    <organismsDiffer>false</organismsDiffer>
    <experiments>4</experiments>
</comment>
<comment type="subcellular location">
    <subcellularLocation>
        <location evidence="14">Cytoplasm</location>
    </subcellularLocation>
    <subcellularLocation>
        <location evidence="14">Nucleus</location>
    </subcellularLocation>
    <text>Targeted to the cell membrane when interacting with CBL1 or CBL5 and to the tonoplast when interacting with CBL2 orCBL10.</text>
</comment>
<comment type="induction">
    <text>Up-regulated in roots by salt stress.</text>
</comment>
<comment type="domain">
    <text evidence="15">The activation loop within the kinase domain is the target of phosphorylation/activation by upstream protein kinases. The PPI motif mediates the interaction with the ABI (abscisic acid-insensitive) phosphatases. The C-terminal part (309-446) of the protein is required for the phosphorylation of CBL, but is not involved in autophosphorylation.</text>
</comment>
<comment type="PTM">
    <text evidence="15">Autophosphorylated.</text>
</comment>
<comment type="similarity">
    <text evidence="16">Belongs to the protein kinase superfamily. CAMK Ser/Thr protein kinase family. SNF1 subfamily.</text>
</comment>
<comment type="sequence caution" evidence="16">
    <conflict type="erroneous gene model prediction">
        <sequence resource="EMBL-CDS" id="AAF67384"/>
    </conflict>
</comment>